<organism>
    <name type="scientific">Halothermothrix orenii (strain H 168 / OCM 544 / DSM 9562)</name>
    <dbReference type="NCBI Taxonomy" id="373903"/>
    <lineage>
        <taxon>Bacteria</taxon>
        <taxon>Bacillati</taxon>
        <taxon>Bacillota</taxon>
        <taxon>Clostridia</taxon>
        <taxon>Halanaerobiales</taxon>
        <taxon>Halothermotrichaceae</taxon>
        <taxon>Halothermothrix</taxon>
    </lineage>
</organism>
<gene>
    <name evidence="1" type="primary">dapL</name>
    <name type="ordered locus">Hore_11560</name>
</gene>
<accession>B8CX89</accession>
<reference key="1">
    <citation type="journal article" date="2009" name="PLoS ONE">
        <title>Genome analysis of the anaerobic thermohalophilic bacterium Halothermothrix orenii.</title>
        <authorList>
            <person name="Mavromatis K."/>
            <person name="Ivanova N."/>
            <person name="Anderson I."/>
            <person name="Lykidis A."/>
            <person name="Hooper S.D."/>
            <person name="Sun H."/>
            <person name="Kunin V."/>
            <person name="Lapidus A."/>
            <person name="Hugenholtz P."/>
            <person name="Patel B."/>
            <person name="Kyrpides N.C."/>
        </authorList>
    </citation>
    <scope>NUCLEOTIDE SEQUENCE [LARGE SCALE GENOMIC DNA]</scope>
    <source>
        <strain>H 168 / OCM 544 / DSM 9562</strain>
    </source>
</reference>
<keyword id="KW-0032">Aminotransferase</keyword>
<keyword id="KW-0663">Pyridoxal phosphate</keyword>
<keyword id="KW-1185">Reference proteome</keyword>
<keyword id="KW-0808">Transferase</keyword>
<proteinExistence type="inferred from homology"/>
<name>DAPAT_HALOH</name>
<evidence type="ECO:0000255" key="1">
    <source>
        <dbReference type="HAMAP-Rule" id="MF_01642"/>
    </source>
</evidence>
<feature type="chain" id="PRO_1000186870" description="LL-diaminopimelate aminotransferase">
    <location>
        <begin position="1"/>
        <end position="389"/>
    </location>
</feature>
<feature type="binding site" evidence="1">
    <location>
        <position position="13"/>
    </location>
    <ligand>
        <name>substrate</name>
    </ligand>
</feature>
<feature type="binding site" evidence="1">
    <location>
        <position position="38"/>
    </location>
    <ligand>
        <name>substrate</name>
    </ligand>
</feature>
<feature type="binding site" evidence="1">
    <location>
        <position position="67"/>
    </location>
    <ligand>
        <name>pyridoxal 5'-phosphate</name>
        <dbReference type="ChEBI" id="CHEBI:597326"/>
    </ligand>
</feature>
<feature type="binding site" evidence="1">
    <location>
        <begin position="101"/>
        <end position="102"/>
    </location>
    <ligand>
        <name>pyridoxal 5'-phosphate</name>
        <dbReference type="ChEBI" id="CHEBI:597326"/>
    </ligand>
</feature>
<feature type="binding site" evidence="1">
    <location>
        <position position="102"/>
    </location>
    <ligand>
        <name>substrate</name>
    </ligand>
</feature>
<feature type="binding site" evidence="1">
    <location>
        <position position="126"/>
    </location>
    <ligand>
        <name>pyridoxal 5'-phosphate</name>
        <dbReference type="ChEBI" id="CHEBI:597326"/>
    </ligand>
</feature>
<feature type="binding site" evidence="1">
    <location>
        <position position="126"/>
    </location>
    <ligand>
        <name>substrate</name>
    </ligand>
</feature>
<feature type="binding site" evidence="1">
    <location>
        <position position="176"/>
    </location>
    <ligand>
        <name>pyridoxal 5'-phosphate</name>
        <dbReference type="ChEBI" id="CHEBI:597326"/>
    </ligand>
</feature>
<feature type="binding site" evidence="1">
    <location>
        <position position="176"/>
    </location>
    <ligand>
        <name>substrate</name>
    </ligand>
</feature>
<feature type="binding site" evidence="1">
    <location>
        <position position="207"/>
    </location>
    <ligand>
        <name>pyridoxal 5'-phosphate</name>
        <dbReference type="ChEBI" id="CHEBI:597326"/>
    </ligand>
</feature>
<feature type="binding site" evidence="1">
    <location>
        <begin position="235"/>
        <end position="237"/>
    </location>
    <ligand>
        <name>pyridoxal 5'-phosphate</name>
        <dbReference type="ChEBI" id="CHEBI:597326"/>
    </ligand>
</feature>
<feature type="binding site" evidence="1">
    <location>
        <position position="246"/>
    </location>
    <ligand>
        <name>pyridoxal 5'-phosphate</name>
        <dbReference type="ChEBI" id="CHEBI:597326"/>
    </ligand>
</feature>
<feature type="binding site" evidence="1">
    <location>
        <position position="364"/>
    </location>
    <ligand>
        <name>substrate</name>
    </ligand>
</feature>
<feature type="modified residue" description="N6-(pyridoxal phosphate)lysine" evidence="1">
    <location>
        <position position="238"/>
    </location>
</feature>
<comment type="function">
    <text evidence="1">Involved in the synthesis of meso-diaminopimelate (m-DAP or DL-DAP), required for both lysine and peptidoglycan biosynthesis. Catalyzes the direct conversion of tetrahydrodipicolinate to LL-diaminopimelate.</text>
</comment>
<comment type="catalytic activity">
    <reaction evidence="1">
        <text>(2S,6S)-2,6-diaminopimelate + 2-oxoglutarate = (S)-2,3,4,5-tetrahydrodipicolinate + L-glutamate + H2O + H(+)</text>
        <dbReference type="Rhea" id="RHEA:23988"/>
        <dbReference type="ChEBI" id="CHEBI:15377"/>
        <dbReference type="ChEBI" id="CHEBI:15378"/>
        <dbReference type="ChEBI" id="CHEBI:16810"/>
        <dbReference type="ChEBI" id="CHEBI:16845"/>
        <dbReference type="ChEBI" id="CHEBI:29985"/>
        <dbReference type="ChEBI" id="CHEBI:57609"/>
        <dbReference type="EC" id="2.6.1.83"/>
    </reaction>
</comment>
<comment type="cofactor">
    <cofactor evidence="1">
        <name>pyridoxal 5'-phosphate</name>
        <dbReference type="ChEBI" id="CHEBI:597326"/>
    </cofactor>
</comment>
<comment type="pathway">
    <text evidence="1">Amino-acid biosynthesis; L-lysine biosynthesis via DAP pathway; LL-2,6-diaminopimelate from (S)-tetrahydrodipicolinate (aminotransferase route): step 1/1.</text>
</comment>
<comment type="subunit">
    <text evidence="1">Homodimer.</text>
</comment>
<comment type="similarity">
    <text evidence="1">Belongs to the class-I pyridoxal-phosphate-dependent aminotransferase family. LL-diaminopimelate aminotransferase subfamily.</text>
</comment>
<sequence>MENADRIKNLPPYLFAEIDKMIARAKKEGVDVISFGIGDPDQPTPDNIINKMIEAVKDPSTHSYPSYEGMYEYRKTVADWYKNNYGRELDPDKEVVSLIGSKEGIAHLPFCYINPGDIALVPDPGYPVYKTSVLLAGGKPVQVPLVEENNFLPDLKAIDEDIARKAKLFFINYPNNPTGAIAPEEFYEELIDFADKYDIIIAHDAAYSEIGLDGYNPPSFMQFEGAKKVGIEFNSLSKPFNMTGWRVGWAVGRSDVIESLGRIKTNIDSGIFEAIQYAGIEALTGPEDNIEKMTELYSKRRDLLVEGLRELGWEVPVNKATFYIWAKVPEGYNSTEFSTHVFEKTGIFFTPGNGYGEFGEGYVRIALTVTEERIKEALERLKNSDIKFK</sequence>
<dbReference type="EC" id="2.6.1.83" evidence="1"/>
<dbReference type="EMBL" id="CP001098">
    <property type="protein sequence ID" value="ACL69908.1"/>
    <property type="molecule type" value="Genomic_DNA"/>
</dbReference>
<dbReference type="RefSeq" id="WP_012636093.1">
    <property type="nucleotide sequence ID" value="NC_011899.1"/>
</dbReference>
<dbReference type="SMR" id="B8CX89"/>
<dbReference type="STRING" id="373903.Hore_11560"/>
<dbReference type="KEGG" id="hor:Hore_11560"/>
<dbReference type="eggNOG" id="COG0436">
    <property type="taxonomic scope" value="Bacteria"/>
</dbReference>
<dbReference type="HOGENOM" id="CLU_017584_4_5_9"/>
<dbReference type="OrthoDB" id="9803354at2"/>
<dbReference type="UniPathway" id="UPA00034">
    <property type="reaction ID" value="UER00466"/>
</dbReference>
<dbReference type="Proteomes" id="UP000000719">
    <property type="component" value="Chromosome"/>
</dbReference>
<dbReference type="GO" id="GO:0010285">
    <property type="term" value="F:L,L-diaminopimelate aminotransferase activity"/>
    <property type="evidence" value="ECO:0007669"/>
    <property type="project" value="UniProtKB-UniRule"/>
</dbReference>
<dbReference type="GO" id="GO:0030170">
    <property type="term" value="F:pyridoxal phosphate binding"/>
    <property type="evidence" value="ECO:0007669"/>
    <property type="project" value="UniProtKB-UniRule"/>
</dbReference>
<dbReference type="GO" id="GO:0033362">
    <property type="term" value="P:lysine biosynthetic process via diaminopimelate, diaminopimelate-aminotransferase pathway"/>
    <property type="evidence" value="ECO:0007669"/>
    <property type="project" value="UniProtKB-UniRule"/>
</dbReference>
<dbReference type="CDD" id="cd00609">
    <property type="entry name" value="AAT_like"/>
    <property type="match status" value="1"/>
</dbReference>
<dbReference type="Gene3D" id="3.90.1150.10">
    <property type="entry name" value="Aspartate Aminotransferase, domain 1"/>
    <property type="match status" value="1"/>
</dbReference>
<dbReference type="Gene3D" id="3.40.640.10">
    <property type="entry name" value="Type I PLP-dependent aspartate aminotransferase-like (Major domain)"/>
    <property type="match status" value="1"/>
</dbReference>
<dbReference type="HAMAP" id="MF_01642">
    <property type="entry name" value="DapL_aminotrans_1"/>
    <property type="match status" value="1"/>
</dbReference>
<dbReference type="InterPro" id="IPR004839">
    <property type="entry name" value="Aminotransferase_I/II_large"/>
</dbReference>
<dbReference type="InterPro" id="IPR019881">
    <property type="entry name" value="DAP-NH2Trfase_DapL_Desulfo"/>
</dbReference>
<dbReference type="InterPro" id="IPR019942">
    <property type="entry name" value="DapL/ALD1"/>
</dbReference>
<dbReference type="InterPro" id="IPR050881">
    <property type="entry name" value="LL-DAP_aminotransferase"/>
</dbReference>
<dbReference type="InterPro" id="IPR004838">
    <property type="entry name" value="NHTrfase_class1_PyrdxlP-BS"/>
</dbReference>
<dbReference type="InterPro" id="IPR015424">
    <property type="entry name" value="PyrdxlP-dep_Trfase"/>
</dbReference>
<dbReference type="InterPro" id="IPR015421">
    <property type="entry name" value="PyrdxlP-dep_Trfase_major"/>
</dbReference>
<dbReference type="InterPro" id="IPR015422">
    <property type="entry name" value="PyrdxlP-dep_Trfase_small"/>
</dbReference>
<dbReference type="NCBIfam" id="TIGR03540">
    <property type="entry name" value="DapC_direct"/>
    <property type="match status" value="1"/>
</dbReference>
<dbReference type="NCBIfam" id="NF006756">
    <property type="entry name" value="PRK09276.1"/>
    <property type="match status" value="1"/>
</dbReference>
<dbReference type="PANTHER" id="PTHR42832">
    <property type="entry name" value="AMINO ACID AMINOTRANSFERASE"/>
    <property type="match status" value="1"/>
</dbReference>
<dbReference type="PANTHER" id="PTHR42832:SF3">
    <property type="entry name" value="L-GLUTAMINE--4-(METHYLSULFANYL)-2-OXOBUTANOATE AMINOTRANSFERASE"/>
    <property type="match status" value="1"/>
</dbReference>
<dbReference type="Pfam" id="PF00155">
    <property type="entry name" value="Aminotran_1_2"/>
    <property type="match status" value="1"/>
</dbReference>
<dbReference type="SUPFAM" id="SSF53383">
    <property type="entry name" value="PLP-dependent transferases"/>
    <property type="match status" value="1"/>
</dbReference>
<dbReference type="PROSITE" id="PS00105">
    <property type="entry name" value="AA_TRANSFER_CLASS_1"/>
    <property type="match status" value="1"/>
</dbReference>
<protein>
    <recommendedName>
        <fullName evidence="1">LL-diaminopimelate aminotransferase</fullName>
        <shortName evidence="1">DAP-AT</shortName>
        <shortName evidence="1">DAP-aminotransferase</shortName>
        <shortName evidence="1">LL-DAP-aminotransferase</shortName>
        <ecNumber evidence="1">2.6.1.83</ecNumber>
    </recommendedName>
</protein>